<proteinExistence type="inferred from homology"/>
<organism>
    <name type="scientific">Acetoanaerobium sticklandii (strain ATCC 12662 / DSM 519 / JCM 1433 / CCUG 9281 / NCIMB 10654 / HF)</name>
    <name type="common">Clostridium sticklandii</name>
    <dbReference type="NCBI Taxonomy" id="499177"/>
    <lineage>
        <taxon>Bacteria</taxon>
        <taxon>Bacillati</taxon>
        <taxon>Bacillota</taxon>
        <taxon>Clostridia</taxon>
        <taxon>Peptostreptococcales</taxon>
        <taxon>Filifactoraceae</taxon>
        <taxon>Acetoanaerobium</taxon>
    </lineage>
</organism>
<comment type="function">
    <text evidence="1">Involved in the anaerobic fermentation of lysine. Catalyzes the oxidative deamination of L-erythro-3,5-diaminohexanoate (3,5-DAH) to 3-keto-5-aminohexanoate (KAH).</text>
</comment>
<comment type="catalytic activity">
    <reaction evidence="1">
        <text>(3S,5S)-3,5-diaminohexanoate + NAD(+) + H2O = (5S)-5-amino-3-oxohexanoate + NH4(+) + NADH + H(+)</text>
        <dbReference type="Rhea" id="RHEA:19633"/>
        <dbReference type="ChEBI" id="CHEBI:15377"/>
        <dbReference type="ChEBI" id="CHEBI:15378"/>
        <dbReference type="ChEBI" id="CHEBI:28938"/>
        <dbReference type="ChEBI" id="CHEBI:57436"/>
        <dbReference type="ChEBI" id="CHEBI:57540"/>
        <dbReference type="ChEBI" id="CHEBI:57945"/>
        <dbReference type="ChEBI" id="CHEBI:58523"/>
        <dbReference type="EC" id="1.4.1.11"/>
    </reaction>
</comment>
<comment type="pathway">
    <text evidence="1">Amino-acid degradation; L-lysine degradation via acetate pathway.</text>
</comment>
<comment type="subunit">
    <text evidence="1">Homodimer.</text>
</comment>
<comment type="similarity">
    <text evidence="2">Belongs to the KDD family.</text>
</comment>
<feature type="chain" id="PRO_0000416980" description="L-erythro-3,5-diaminohexanoate dehydrogenase">
    <location>
        <begin position="1"/>
        <end position="344"/>
    </location>
</feature>
<protein>
    <recommendedName>
        <fullName evidence="1">L-erythro-3,5-diaminohexanoate dehydrogenase</fullName>
        <ecNumber evidence="1">1.4.1.11</ecNumber>
    </recommendedName>
    <alternativeName>
        <fullName evidence="1">3,5-diaminohexanoate dehydrogenase</fullName>
    </alternativeName>
</protein>
<reference key="1">
    <citation type="journal article" date="2010" name="BMC Genomics">
        <title>Clostridium sticklandii, a specialist in amino acid degradation:revisiting its metabolism through its genome sequence.</title>
        <authorList>
            <person name="Fonknechten N."/>
            <person name="Chaussonnerie S."/>
            <person name="Tricot S."/>
            <person name="Lajus A."/>
            <person name="Andreesen J.R."/>
            <person name="Perchat N."/>
            <person name="Pelletier E."/>
            <person name="Gouyvenoux M."/>
            <person name="Barbe V."/>
            <person name="Salanoubat M."/>
            <person name="Le Paslier D."/>
            <person name="Weissenbach J."/>
            <person name="Cohen G.N."/>
            <person name="Kreimeyer A."/>
        </authorList>
    </citation>
    <scope>NUCLEOTIDE SEQUENCE [LARGE SCALE GENOMIC DNA]</scope>
    <source>
        <strain>ATCC 12662 / DSM 519 / JCM 1433 / CCUG 9281 / NCIMB 10654 / HF</strain>
    </source>
</reference>
<evidence type="ECO:0000250" key="1">
    <source>
        <dbReference type="UniProtKB" id="Q8RHX3"/>
    </source>
</evidence>
<evidence type="ECO:0000305" key="2"/>
<name>KDD_ACESD</name>
<sequence length="344" mass="36786">MKGCKYGTHRVIEPKGSLPQPALKISNDMNIFSNEILIDVQALNVDSASFTQIEEEAGHDTKKIAAKILEIVGERGKMQNPVTGSGGMLIGTIEKIGEDLEGKIDLKVGDKIATLVSLSLTPLQIDEIIDIKPDIDRVEIKGKAILFESGIYAKLPTDMSETLALAALDVAGAPAQTAKLVKPGDSVLILGAAGKSGMMCCYEAKKRVGPTGRVVGLVRNEKSKAKLLEMGIVDDVIIASAQLPVEVLETSLAANNGNEYDISINCVNVENTEMSSILPIRNGGTVYFFSMATSFTKAALGAEGVGKDVDMIIGNGYTKGHAEITLQILRESEIVRTTFEKMYL</sequence>
<dbReference type="EC" id="1.4.1.11" evidence="1"/>
<dbReference type="EMBL" id="FP565809">
    <property type="protein sequence ID" value="CBH21503.1"/>
    <property type="molecule type" value="Genomic_DNA"/>
</dbReference>
<dbReference type="SMR" id="E3PRJ9"/>
<dbReference type="STRING" id="1511.CLOST_1383"/>
<dbReference type="KEGG" id="cst:CLOST_1383"/>
<dbReference type="eggNOG" id="COG0604">
    <property type="taxonomic scope" value="Bacteria"/>
</dbReference>
<dbReference type="HOGENOM" id="CLU_826176_0_0_9"/>
<dbReference type="UniPathway" id="UPA00870"/>
<dbReference type="Proteomes" id="UP000007041">
    <property type="component" value="Chromosome"/>
</dbReference>
<dbReference type="GO" id="GO:0047124">
    <property type="term" value="F:L-erythro-3,5-diaminohexanoate dehydrogenase activity"/>
    <property type="evidence" value="ECO:0007669"/>
    <property type="project" value="UniProtKB-EC"/>
</dbReference>
<dbReference type="GO" id="GO:0019475">
    <property type="term" value="P:L-lysine catabolic process to acetate"/>
    <property type="evidence" value="ECO:0007669"/>
    <property type="project" value="UniProtKB-UniPathway"/>
</dbReference>
<dbReference type="Gene3D" id="3.90.180.10">
    <property type="entry name" value="Medium-chain alcohol dehydrogenases, catalytic domain"/>
    <property type="match status" value="1"/>
</dbReference>
<dbReference type="InterPro" id="IPR036291">
    <property type="entry name" value="NAD(P)-bd_dom_sf"/>
</dbReference>
<dbReference type="SUPFAM" id="SSF51735">
    <property type="entry name" value="NAD(P)-binding Rossmann-fold domains"/>
    <property type="match status" value="1"/>
</dbReference>
<keyword id="KW-0520">NAD</keyword>
<keyword id="KW-0521">NADP</keyword>
<keyword id="KW-0560">Oxidoreductase</keyword>
<keyword id="KW-1185">Reference proteome</keyword>
<gene>
    <name evidence="1" type="primary">kdd</name>
    <name type="ordered locus">CLOST_1383</name>
</gene>
<accession>E3PRJ9</accession>